<sequence>MSHSWDYDAIVIGSGPGGEGAAMGLVKQGARVAVIERYHNVGGGCTHWGTIPSKALRHAVSRIIEFNQNPLYSDHSRLLRSSFADILNHADSVINQQTHMRQGFYERNHCEILQGNAHFVDEHTLALECHDGTVETVTAEKFVIACGSRPYHPADVDFHHPRIYDSDSILSLQHEPRHVIIYGAGVIGCEYASIFRGMEVKVDLINTRDRLLAFLDQEMSDSLSYHFWNSGVVIRHNEEYEKIEGVDDGVIMHLKSGKKLKADCLLYANGRTGNTDTLALENIGLQTDSRGQLKVNSMYQTALPHIYAVGDVIGYPSLASAAYDQGRIAAQALVKGEASAHLIEDIPTGIYTIPEISSVGKTEQQLTAMKVPYEVGRAQFKHLARAQIVGMSVGTLKILFHRETKEILGIHCFGERAAEIIHIGQAIMEQKGGGNTIEYFVNTTFNYPTMAEAYRVAALNGLNRLF</sequence>
<comment type="function">
    <text evidence="1">Conversion of NADPH, generated by peripheral catabolic pathways, to NADH, which can enter the respiratory chain for energy generation.</text>
</comment>
<comment type="catalytic activity">
    <reaction evidence="1">
        <text>NAD(+) + NADPH = NADH + NADP(+)</text>
        <dbReference type="Rhea" id="RHEA:11692"/>
        <dbReference type="ChEBI" id="CHEBI:57540"/>
        <dbReference type="ChEBI" id="CHEBI:57783"/>
        <dbReference type="ChEBI" id="CHEBI:57945"/>
        <dbReference type="ChEBI" id="CHEBI:58349"/>
        <dbReference type="EC" id="1.6.1.1"/>
    </reaction>
</comment>
<comment type="cofactor">
    <cofactor evidence="1">
        <name>FAD</name>
        <dbReference type="ChEBI" id="CHEBI:57692"/>
    </cofactor>
    <text evidence="1">Binds 1 FAD per subunit.</text>
</comment>
<comment type="subcellular location">
    <subcellularLocation>
        <location evidence="1">Cytoplasm</location>
    </subcellularLocation>
</comment>
<comment type="similarity">
    <text evidence="1">Belongs to the class-I pyridine nucleotide-disulfide oxidoreductase family.</text>
</comment>
<feature type="chain" id="PRO_1000012557" description="Soluble pyridine nucleotide transhydrogenase">
    <location>
        <begin position="1"/>
        <end position="466"/>
    </location>
</feature>
<feature type="binding site" evidence="1">
    <location>
        <begin position="36"/>
        <end position="45"/>
    </location>
    <ligand>
        <name>FAD</name>
        <dbReference type="ChEBI" id="CHEBI:57692"/>
    </ligand>
</feature>
<name>STHA_KLEP7</name>
<keyword id="KW-0963">Cytoplasm</keyword>
<keyword id="KW-0274">FAD</keyword>
<keyword id="KW-0285">Flavoprotein</keyword>
<keyword id="KW-0520">NAD</keyword>
<keyword id="KW-0521">NADP</keyword>
<keyword id="KW-0560">Oxidoreductase</keyword>
<gene>
    <name evidence="1" type="primary">sthA</name>
    <name evidence="1" type="synonym">udhA</name>
    <name type="ordered locus">KPN78578_42060</name>
    <name type="ORF">KPN_04251</name>
</gene>
<accession>A6TGE6</accession>
<protein>
    <recommendedName>
        <fullName evidence="1">Soluble pyridine nucleotide transhydrogenase</fullName>
        <shortName evidence="1">STH</shortName>
        <ecNumber evidence="1">1.6.1.1</ecNumber>
    </recommendedName>
    <alternativeName>
        <fullName evidence="1">NAD(P)(+) transhydrogenase [B-specific]</fullName>
    </alternativeName>
</protein>
<reference key="1">
    <citation type="submission" date="2006-09" db="EMBL/GenBank/DDBJ databases">
        <authorList>
            <consortium name="The Klebsiella pneumonia Genome Sequencing Project"/>
            <person name="McClelland M."/>
            <person name="Sanderson E.K."/>
            <person name="Spieth J."/>
            <person name="Clifton W.S."/>
            <person name="Latreille P."/>
            <person name="Sabo A."/>
            <person name="Pepin K."/>
            <person name="Bhonagiri V."/>
            <person name="Porwollik S."/>
            <person name="Ali J."/>
            <person name="Wilson R.K."/>
        </authorList>
    </citation>
    <scope>NUCLEOTIDE SEQUENCE [LARGE SCALE GENOMIC DNA]</scope>
    <source>
        <strain>ATCC 700721 / MGH 78578</strain>
    </source>
</reference>
<dbReference type="EC" id="1.6.1.1" evidence="1"/>
<dbReference type="EMBL" id="CP000647">
    <property type="protein sequence ID" value="ABR79630.1"/>
    <property type="molecule type" value="Genomic_DNA"/>
</dbReference>
<dbReference type="RefSeq" id="WP_002883016.1">
    <property type="nucleotide sequence ID" value="NC_009648.1"/>
</dbReference>
<dbReference type="SMR" id="A6TGE6"/>
<dbReference type="STRING" id="272620.KPN_04251"/>
<dbReference type="PaxDb" id="272620-KPN_04251"/>
<dbReference type="EnsemblBacteria" id="ABR79630">
    <property type="protein sequence ID" value="ABR79630"/>
    <property type="gene ID" value="KPN_04251"/>
</dbReference>
<dbReference type="GeneID" id="93251601"/>
<dbReference type="KEGG" id="kpn:KPN_04251"/>
<dbReference type="HOGENOM" id="CLU_016755_0_0_6"/>
<dbReference type="Proteomes" id="UP000000265">
    <property type="component" value="Chromosome"/>
</dbReference>
<dbReference type="GO" id="GO:0005829">
    <property type="term" value="C:cytosol"/>
    <property type="evidence" value="ECO:0007669"/>
    <property type="project" value="TreeGrafter"/>
</dbReference>
<dbReference type="GO" id="GO:0004148">
    <property type="term" value="F:dihydrolipoyl dehydrogenase (NADH) activity"/>
    <property type="evidence" value="ECO:0007669"/>
    <property type="project" value="TreeGrafter"/>
</dbReference>
<dbReference type="GO" id="GO:0050660">
    <property type="term" value="F:flavin adenine dinucleotide binding"/>
    <property type="evidence" value="ECO:0007669"/>
    <property type="project" value="TreeGrafter"/>
</dbReference>
<dbReference type="GO" id="GO:0003957">
    <property type="term" value="F:NAD(P)+ transhydrogenase (Si-specific) activity"/>
    <property type="evidence" value="ECO:0007669"/>
    <property type="project" value="UniProtKB-UniRule"/>
</dbReference>
<dbReference type="GO" id="GO:0006103">
    <property type="term" value="P:2-oxoglutarate metabolic process"/>
    <property type="evidence" value="ECO:0007669"/>
    <property type="project" value="TreeGrafter"/>
</dbReference>
<dbReference type="GO" id="GO:0006739">
    <property type="term" value="P:NADP metabolic process"/>
    <property type="evidence" value="ECO:0007669"/>
    <property type="project" value="UniProtKB-UniRule"/>
</dbReference>
<dbReference type="FunFam" id="3.30.390.30:FF:000002">
    <property type="entry name" value="Soluble pyridine nucleotide transhydrogenase"/>
    <property type="match status" value="1"/>
</dbReference>
<dbReference type="FunFam" id="3.50.50.60:FF:000008">
    <property type="entry name" value="Soluble pyridine nucleotide transhydrogenase"/>
    <property type="match status" value="1"/>
</dbReference>
<dbReference type="Gene3D" id="3.30.390.30">
    <property type="match status" value="1"/>
</dbReference>
<dbReference type="Gene3D" id="3.50.50.60">
    <property type="entry name" value="FAD/NAD(P)-binding domain"/>
    <property type="match status" value="2"/>
</dbReference>
<dbReference type="HAMAP" id="MF_00247">
    <property type="entry name" value="SthA"/>
    <property type="match status" value="1"/>
</dbReference>
<dbReference type="InterPro" id="IPR050151">
    <property type="entry name" value="Class-I_Pyr_Nuc-Dis_Oxidored"/>
</dbReference>
<dbReference type="InterPro" id="IPR036188">
    <property type="entry name" value="FAD/NAD-bd_sf"/>
</dbReference>
<dbReference type="InterPro" id="IPR023753">
    <property type="entry name" value="FAD/NAD-binding_dom"/>
</dbReference>
<dbReference type="InterPro" id="IPR016156">
    <property type="entry name" value="FAD/NAD-linked_Rdtase_dimer_sf"/>
</dbReference>
<dbReference type="InterPro" id="IPR001100">
    <property type="entry name" value="Pyr_nuc-diS_OxRdtase"/>
</dbReference>
<dbReference type="InterPro" id="IPR004099">
    <property type="entry name" value="Pyr_nucl-diS_OxRdtase_dimer"/>
</dbReference>
<dbReference type="InterPro" id="IPR022962">
    <property type="entry name" value="STH_gammaproteobact"/>
</dbReference>
<dbReference type="NCBIfam" id="NF003585">
    <property type="entry name" value="PRK05249.1"/>
    <property type="match status" value="1"/>
</dbReference>
<dbReference type="PANTHER" id="PTHR22912">
    <property type="entry name" value="DISULFIDE OXIDOREDUCTASE"/>
    <property type="match status" value="1"/>
</dbReference>
<dbReference type="PANTHER" id="PTHR22912:SF93">
    <property type="entry name" value="SOLUBLE PYRIDINE NUCLEOTIDE TRANSHYDROGENASE"/>
    <property type="match status" value="1"/>
</dbReference>
<dbReference type="Pfam" id="PF07992">
    <property type="entry name" value="Pyr_redox_2"/>
    <property type="match status" value="1"/>
</dbReference>
<dbReference type="Pfam" id="PF02852">
    <property type="entry name" value="Pyr_redox_dim"/>
    <property type="match status" value="1"/>
</dbReference>
<dbReference type="PIRSF" id="PIRSF000350">
    <property type="entry name" value="Mercury_reductase_MerA"/>
    <property type="match status" value="1"/>
</dbReference>
<dbReference type="PRINTS" id="PR00368">
    <property type="entry name" value="FADPNR"/>
</dbReference>
<dbReference type="PRINTS" id="PR00411">
    <property type="entry name" value="PNDRDTASEI"/>
</dbReference>
<dbReference type="SUPFAM" id="SSF51905">
    <property type="entry name" value="FAD/NAD(P)-binding domain"/>
    <property type="match status" value="1"/>
</dbReference>
<dbReference type="SUPFAM" id="SSF55424">
    <property type="entry name" value="FAD/NAD-linked reductases, dimerisation (C-terminal) domain"/>
    <property type="match status" value="1"/>
</dbReference>
<organism>
    <name type="scientific">Klebsiella pneumoniae subsp. pneumoniae (strain ATCC 700721 / MGH 78578)</name>
    <dbReference type="NCBI Taxonomy" id="272620"/>
    <lineage>
        <taxon>Bacteria</taxon>
        <taxon>Pseudomonadati</taxon>
        <taxon>Pseudomonadota</taxon>
        <taxon>Gammaproteobacteria</taxon>
        <taxon>Enterobacterales</taxon>
        <taxon>Enterobacteriaceae</taxon>
        <taxon>Klebsiella/Raoultella group</taxon>
        <taxon>Klebsiella</taxon>
        <taxon>Klebsiella pneumoniae complex</taxon>
    </lineage>
</organism>
<proteinExistence type="inferred from homology"/>
<evidence type="ECO:0000255" key="1">
    <source>
        <dbReference type="HAMAP-Rule" id="MF_00247"/>
    </source>
</evidence>